<organism>
    <name type="scientific">Xanthobacter autotrophicus (strain ATCC BAA-1158 / Py2)</name>
    <dbReference type="NCBI Taxonomy" id="78245"/>
    <lineage>
        <taxon>Bacteria</taxon>
        <taxon>Pseudomonadati</taxon>
        <taxon>Pseudomonadota</taxon>
        <taxon>Alphaproteobacteria</taxon>
        <taxon>Hyphomicrobiales</taxon>
        <taxon>Xanthobacteraceae</taxon>
        <taxon>Xanthobacter</taxon>
    </lineage>
</organism>
<sequence>MATQNGGPTQNAAPSLNVLAQYIKDFSFENPNAPRSLAAPPSQPDVNIQIHVNARPGGNGEFEVELKIDGGASIEGNTLFAFELVYAGVFRILNVPEESLQPVALIECPRLLFPFARQIIADAVRNGGFPPLMIDPVDFAALFQQRMQQEGQRIQA</sequence>
<comment type="function">
    <text evidence="1">One of the proteins required for the normal export of preproteins out of the cell cytoplasm. It is a molecular chaperone that binds to a subset of precursor proteins, maintaining them in a translocation-competent state. It also specifically binds to its receptor SecA.</text>
</comment>
<comment type="subunit">
    <text evidence="1">Homotetramer, a dimer of dimers. One homotetramer interacts with 1 SecA dimer.</text>
</comment>
<comment type="subcellular location">
    <subcellularLocation>
        <location evidence="1">Cytoplasm</location>
    </subcellularLocation>
</comment>
<comment type="similarity">
    <text evidence="1">Belongs to the SecB family.</text>
</comment>
<accession>A7IGA7</accession>
<proteinExistence type="inferred from homology"/>
<name>SECB_XANP2</name>
<gene>
    <name evidence="1" type="primary">secB</name>
    <name type="ordered locus">Xaut_1805</name>
</gene>
<reference key="1">
    <citation type="submission" date="2007-07" db="EMBL/GenBank/DDBJ databases">
        <title>Complete sequence of chromosome of Xanthobacter autotrophicus Py2.</title>
        <authorList>
            <consortium name="US DOE Joint Genome Institute"/>
            <person name="Copeland A."/>
            <person name="Lucas S."/>
            <person name="Lapidus A."/>
            <person name="Barry K."/>
            <person name="Glavina del Rio T."/>
            <person name="Hammon N."/>
            <person name="Israni S."/>
            <person name="Dalin E."/>
            <person name="Tice H."/>
            <person name="Pitluck S."/>
            <person name="Sims D."/>
            <person name="Brettin T."/>
            <person name="Bruce D."/>
            <person name="Detter J.C."/>
            <person name="Han C."/>
            <person name="Tapia R."/>
            <person name="Brainard J."/>
            <person name="Schmutz J."/>
            <person name="Larimer F."/>
            <person name="Land M."/>
            <person name="Hauser L."/>
            <person name="Kyrpides N."/>
            <person name="Kim E."/>
            <person name="Ensigns S.A."/>
            <person name="Richardson P."/>
        </authorList>
    </citation>
    <scope>NUCLEOTIDE SEQUENCE [LARGE SCALE GENOMIC DNA]</scope>
    <source>
        <strain>ATCC BAA-1158 / Py2</strain>
    </source>
</reference>
<dbReference type="EMBL" id="CP000781">
    <property type="protein sequence ID" value="ABS67050.1"/>
    <property type="molecule type" value="Genomic_DNA"/>
</dbReference>
<dbReference type="SMR" id="A7IGA7"/>
<dbReference type="STRING" id="78245.Xaut_1805"/>
<dbReference type="KEGG" id="xau:Xaut_1805"/>
<dbReference type="eggNOG" id="COG1952">
    <property type="taxonomic scope" value="Bacteria"/>
</dbReference>
<dbReference type="HOGENOM" id="CLU_111574_0_0_5"/>
<dbReference type="OrthoDB" id="9795145at2"/>
<dbReference type="PhylomeDB" id="A7IGA7"/>
<dbReference type="Proteomes" id="UP000002417">
    <property type="component" value="Chromosome"/>
</dbReference>
<dbReference type="GO" id="GO:0005737">
    <property type="term" value="C:cytoplasm"/>
    <property type="evidence" value="ECO:0007669"/>
    <property type="project" value="UniProtKB-SubCell"/>
</dbReference>
<dbReference type="GO" id="GO:0051082">
    <property type="term" value="F:unfolded protein binding"/>
    <property type="evidence" value="ECO:0007669"/>
    <property type="project" value="InterPro"/>
</dbReference>
<dbReference type="GO" id="GO:0006457">
    <property type="term" value="P:protein folding"/>
    <property type="evidence" value="ECO:0007669"/>
    <property type="project" value="UniProtKB-UniRule"/>
</dbReference>
<dbReference type="GO" id="GO:0051262">
    <property type="term" value="P:protein tetramerization"/>
    <property type="evidence" value="ECO:0007669"/>
    <property type="project" value="InterPro"/>
</dbReference>
<dbReference type="GO" id="GO:0015031">
    <property type="term" value="P:protein transport"/>
    <property type="evidence" value="ECO:0007669"/>
    <property type="project" value="UniProtKB-UniRule"/>
</dbReference>
<dbReference type="Gene3D" id="3.10.420.10">
    <property type="entry name" value="SecB-like"/>
    <property type="match status" value="1"/>
</dbReference>
<dbReference type="HAMAP" id="MF_00821">
    <property type="entry name" value="SecB"/>
    <property type="match status" value="1"/>
</dbReference>
<dbReference type="InterPro" id="IPR003708">
    <property type="entry name" value="SecB"/>
</dbReference>
<dbReference type="InterPro" id="IPR035958">
    <property type="entry name" value="SecB-like_sf"/>
</dbReference>
<dbReference type="NCBIfam" id="NF004392">
    <property type="entry name" value="PRK05751.1-3"/>
    <property type="match status" value="1"/>
</dbReference>
<dbReference type="NCBIfam" id="TIGR00809">
    <property type="entry name" value="secB"/>
    <property type="match status" value="1"/>
</dbReference>
<dbReference type="PANTHER" id="PTHR36918">
    <property type="match status" value="1"/>
</dbReference>
<dbReference type="PANTHER" id="PTHR36918:SF1">
    <property type="entry name" value="PROTEIN-EXPORT PROTEIN SECB"/>
    <property type="match status" value="1"/>
</dbReference>
<dbReference type="Pfam" id="PF02556">
    <property type="entry name" value="SecB"/>
    <property type="match status" value="1"/>
</dbReference>
<dbReference type="PRINTS" id="PR01594">
    <property type="entry name" value="SECBCHAPRONE"/>
</dbReference>
<dbReference type="SUPFAM" id="SSF54611">
    <property type="entry name" value="SecB-like"/>
    <property type="match status" value="1"/>
</dbReference>
<feature type="chain" id="PRO_1000195354" description="Protein-export protein SecB">
    <location>
        <begin position="1"/>
        <end position="156"/>
    </location>
</feature>
<evidence type="ECO:0000255" key="1">
    <source>
        <dbReference type="HAMAP-Rule" id="MF_00821"/>
    </source>
</evidence>
<keyword id="KW-0143">Chaperone</keyword>
<keyword id="KW-0963">Cytoplasm</keyword>
<keyword id="KW-0653">Protein transport</keyword>
<keyword id="KW-1185">Reference proteome</keyword>
<keyword id="KW-0811">Translocation</keyword>
<keyword id="KW-0813">Transport</keyword>
<protein>
    <recommendedName>
        <fullName evidence="1">Protein-export protein SecB</fullName>
    </recommendedName>
</protein>